<name>SYDC_BOVIN</name>
<feature type="chain" id="PRO_0000245022" description="Aspartate--tRNA ligase, cytoplasmic">
    <location>
        <begin position="1"/>
        <end position="501"/>
    </location>
</feature>
<feature type="region of interest" description="Aspartate" evidence="1">
    <location>
        <begin position="251"/>
        <end position="254"/>
    </location>
</feature>
<feature type="region of interest" description="Binding site for the 3'-end of tRNA" evidence="4">
    <location>
        <begin position="411"/>
        <end position="415"/>
    </location>
</feature>
<feature type="binding site" evidence="1">
    <location>
        <position position="229"/>
    </location>
    <ligand>
        <name>L-aspartate</name>
        <dbReference type="ChEBI" id="CHEBI:29991"/>
    </ligand>
</feature>
<feature type="binding site" evidence="1">
    <location>
        <begin position="273"/>
        <end position="275"/>
    </location>
    <ligand>
        <name>ATP</name>
        <dbReference type="ChEBI" id="CHEBI:30616"/>
    </ligand>
</feature>
<feature type="binding site" evidence="1">
    <location>
        <position position="273"/>
    </location>
    <ligand>
        <name>L-aspartate</name>
        <dbReference type="ChEBI" id="CHEBI:29991"/>
    </ligand>
</feature>
<feature type="binding site" evidence="1">
    <location>
        <begin position="281"/>
        <end position="283"/>
    </location>
    <ligand>
        <name>ATP</name>
        <dbReference type="ChEBI" id="CHEBI:30616"/>
    </ligand>
</feature>
<feature type="binding site" evidence="1">
    <location>
        <position position="424"/>
    </location>
    <ligand>
        <name>ATP</name>
        <dbReference type="ChEBI" id="CHEBI:30616"/>
    </ligand>
</feature>
<feature type="binding site" evidence="1">
    <location>
        <position position="427"/>
    </location>
    <ligand>
        <name>L-aspartate</name>
        <dbReference type="ChEBI" id="CHEBI:29991"/>
    </ligand>
</feature>
<feature type="binding site" evidence="1">
    <location>
        <position position="431"/>
    </location>
    <ligand>
        <name>L-aspartate</name>
        <dbReference type="ChEBI" id="CHEBI:29991"/>
    </ligand>
</feature>
<feature type="binding site" evidence="1">
    <location>
        <begin position="472"/>
        <end position="475"/>
    </location>
    <ligand>
        <name>ATP</name>
        <dbReference type="ChEBI" id="CHEBI:30616"/>
    </ligand>
</feature>
<feature type="modified residue" description="Phosphothreonine" evidence="2">
    <location>
        <position position="52"/>
    </location>
</feature>
<feature type="modified residue" description="N6-acetyllysine" evidence="2">
    <location>
        <position position="74"/>
    </location>
</feature>
<feature type="modified residue" description="Phosphoserine" evidence="2">
    <location>
        <position position="249"/>
    </location>
</feature>
<feature type="modified residue" description="N6-acetyllysine" evidence="2">
    <location>
        <position position="374"/>
    </location>
</feature>
<feature type="modified residue" description="Phosphothreonine; by PKA" evidence="4">
    <location>
        <position position="500"/>
    </location>
</feature>
<evidence type="ECO:0000250" key="1"/>
<evidence type="ECO:0000250" key="2">
    <source>
        <dbReference type="UniProtKB" id="P14868"/>
    </source>
</evidence>
<evidence type="ECO:0000250" key="3">
    <source>
        <dbReference type="UniProtKB" id="P15178"/>
    </source>
</evidence>
<evidence type="ECO:0000255" key="4"/>
<evidence type="ECO:0000305" key="5"/>
<proteinExistence type="evidence at transcript level"/>
<reference key="1">
    <citation type="submission" date="2005-08" db="EMBL/GenBank/DDBJ databases">
        <authorList>
            <consortium name="NIH - Mammalian Gene Collection (MGC) project"/>
        </authorList>
    </citation>
    <scope>NUCLEOTIDE SEQUENCE [LARGE SCALE MRNA]</scope>
    <source>
        <strain>Crossbred X Angus</strain>
        <tissue>Ileum</tissue>
    </source>
</reference>
<sequence length="501" mass="57036">MPSANASRRSQEKPREIMDAAEDYAKERYGVSSMIQSQEKPDRVLVRISDLTVQKAGEVVWVRARVHTSRAKGKQCFLVLRQQQFNVQALVAVGDHASKQMVKFAANINKESIVDVEGVVRKVNQKIGSCTQQDVELHVQKIYVISSAEPRLPLQLDDAVRPEVEGEEEGRATVNQDTRLDNRVIDLRTSTSQAIFRLQSGICHPFRETLTNKGFVEIQTPKIISAASEGGANVFTVSYFKNNAYLAQSPQLYKQMCICADFEKVFCIGPVFRAEDSNTHRHLTEFVGLDIEMAFNYHYHEVVEEIADTLVQIFKGLQKRFQTEIQTVNKQFPCEPFKFLEPTLRLEYCEALAMLREAGIEMGDEEDLSTPNEKLLGRLVKEKYDTDFYILDKYPLAVRPFYTMPDPRNPKQSNSYDMFMRGEEILSGAQRIHDPQLVTERALHHGIDLEKIKAYIDSFRFGAPPHAGGGIGLERVTMLFLGLHNVRQTSMFPRDPKRLTP</sequence>
<organism>
    <name type="scientific">Bos taurus</name>
    <name type="common">Bovine</name>
    <dbReference type="NCBI Taxonomy" id="9913"/>
    <lineage>
        <taxon>Eukaryota</taxon>
        <taxon>Metazoa</taxon>
        <taxon>Chordata</taxon>
        <taxon>Craniata</taxon>
        <taxon>Vertebrata</taxon>
        <taxon>Euteleostomi</taxon>
        <taxon>Mammalia</taxon>
        <taxon>Eutheria</taxon>
        <taxon>Laurasiatheria</taxon>
        <taxon>Artiodactyla</taxon>
        <taxon>Ruminantia</taxon>
        <taxon>Pecora</taxon>
        <taxon>Bovidae</taxon>
        <taxon>Bovinae</taxon>
        <taxon>Bos</taxon>
    </lineage>
</organism>
<dbReference type="EC" id="6.1.1.12" evidence="3"/>
<dbReference type="EMBL" id="BC103319">
    <property type="protein sequence ID" value="AAI03320.1"/>
    <property type="molecule type" value="mRNA"/>
</dbReference>
<dbReference type="RefSeq" id="NP_001030257.1">
    <property type="nucleotide sequence ID" value="NM_001035085.1"/>
</dbReference>
<dbReference type="SMR" id="Q3SYZ4"/>
<dbReference type="FunCoup" id="Q3SYZ4">
    <property type="interactions" value="3261"/>
</dbReference>
<dbReference type="STRING" id="9913.ENSBTAP00000065619"/>
<dbReference type="PaxDb" id="9913-ENSBTAP00000013123"/>
<dbReference type="PeptideAtlas" id="Q3SYZ4"/>
<dbReference type="GeneID" id="510162"/>
<dbReference type="KEGG" id="bta:510162"/>
<dbReference type="CTD" id="1615"/>
<dbReference type="eggNOG" id="KOG0556">
    <property type="taxonomic scope" value="Eukaryota"/>
</dbReference>
<dbReference type="InParanoid" id="Q3SYZ4"/>
<dbReference type="OrthoDB" id="372395at2759"/>
<dbReference type="Proteomes" id="UP000009136">
    <property type="component" value="Unplaced"/>
</dbReference>
<dbReference type="GO" id="GO:0017101">
    <property type="term" value="C:aminoacyl-tRNA synthetase multienzyme complex"/>
    <property type="evidence" value="ECO:0000250"/>
    <property type="project" value="UniProtKB"/>
</dbReference>
<dbReference type="GO" id="GO:0005829">
    <property type="term" value="C:cytosol"/>
    <property type="evidence" value="ECO:0000318"/>
    <property type="project" value="GO_Central"/>
</dbReference>
<dbReference type="GO" id="GO:0004815">
    <property type="term" value="F:aspartate-tRNA ligase activity"/>
    <property type="evidence" value="ECO:0000318"/>
    <property type="project" value="GO_Central"/>
</dbReference>
<dbReference type="GO" id="GO:0005524">
    <property type="term" value="F:ATP binding"/>
    <property type="evidence" value="ECO:0007669"/>
    <property type="project" value="UniProtKB-KW"/>
</dbReference>
<dbReference type="GO" id="GO:0003723">
    <property type="term" value="F:RNA binding"/>
    <property type="evidence" value="ECO:0000318"/>
    <property type="project" value="GO_Central"/>
</dbReference>
<dbReference type="GO" id="GO:0006422">
    <property type="term" value="P:aspartyl-tRNA aminoacylation"/>
    <property type="evidence" value="ECO:0000318"/>
    <property type="project" value="GO_Central"/>
</dbReference>
<dbReference type="CDD" id="cd04320">
    <property type="entry name" value="AspRS_cyto_N"/>
    <property type="match status" value="1"/>
</dbReference>
<dbReference type="CDD" id="cd00776">
    <property type="entry name" value="AsxRS_core"/>
    <property type="match status" value="1"/>
</dbReference>
<dbReference type="FunFam" id="2.40.50.140:FF:000144">
    <property type="entry name" value="Aspartate--tRNA ligase, cytoplasmic"/>
    <property type="match status" value="1"/>
</dbReference>
<dbReference type="FunFam" id="3.30.930.10:FF:000013">
    <property type="entry name" value="Aspartate--tRNA ligase, cytoplasmic"/>
    <property type="match status" value="1"/>
</dbReference>
<dbReference type="Gene3D" id="3.30.930.10">
    <property type="entry name" value="Bira Bifunctional Protein, Domain 2"/>
    <property type="match status" value="1"/>
</dbReference>
<dbReference type="Gene3D" id="2.40.50.140">
    <property type="entry name" value="Nucleic acid-binding proteins"/>
    <property type="match status" value="1"/>
</dbReference>
<dbReference type="HAMAP" id="MF_02075">
    <property type="entry name" value="Asp_tRNA_synth_type2"/>
    <property type="match status" value="1"/>
</dbReference>
<dbReference type="InterPro" id="IPR004364">
    <property type="entry name" value="Aa-tRNA-synt_II"/>
</dbReference>
<dbReference type="InterPro" id="IPR006195">
    <property type="entry name" value="aa-tRNA-synth_II"/>
</dbReference>
<dbReference type="InterPro" id="IPR045864">
    <property type="entry name" value="aa-tRNA-synth_II/BPL/LPL"/>
</dbReference>
<dbReference type="InterPro" id="IPR004523">
    <property type="entry name" value="Asp-tRNA_synthase_2"/>
</dbReference>
<dbReference type="InterPro" id="IPR002312">
    <property type="entry name" value="Asp/Asn-tRNA-synth_IIb"/>
</dbReference>
<dbReference type="InterPro" id="IPR012340">
    <property type="entry name" value="NA-bd_OB-fold"/>
</dbReference>
<dbReference type="InterPro" id="IPR004365">
    <property type="entry name" value="NA-bd_OB_tRNA"/>
</dbReference>
<dbReference type="NCBIfam" id="TIGR00458">
    <property type="entry name" value="aspS_nondisc"/>
    <property type="match status" value="1"/>
</dbReference>
<dbReference type="NCBIfam" id="NF003483">
    <property type="entry name" value="PRK05159.1"/>
    <property type="match status" value="1"/>
</dbReference>
<dbReference type="PANTHER" id="PTHR43450:SF1">
    <property type="entry name" value="ASPARTATE--TRNA LIGASE, CYTOPLASMIC"/>
    <property type="match status" value="1"/>
</dbReference>
<dbReference type="PANTHER" id="PTHR43450">
    <property type="entry name" value="ASPARTYL-TRNA SYNTHETASE"/>
    <property type="match status" value="1"/>
</dbReference>
<dbReference type="Pfam" id="PF00152">
    <property type="entry name" value="tRNA-synt_2"/>
    <property type="match status" value="1"/>
</dbReference>
<dbReference type="Pfam" id="PF01336">
    <property type="entry name" value="tRNA_anti-codon"/>
    <property type="match status" value="1"/>
</dbReference>
<dbReference type="PRINTS" id="PR01042">
    <property type="entry name" value="TRNASYNTHASP"/>
</dbReference>
<dbReference type="SUPFAM" id="SSF55681">
    <property type="entry name" value="Class II aaRS and biotin synthetases"/>
    <property type="match status" value="1"/>
</dbReference>
<dbReference type="SUPFAM" id="SSF50249">
    <property type="entry name" value="Nucleic acid-binding proteins"/>
    <property type="match status" value="1"/>
</dbReference>
<dbReference type="PROSITE" id="PS50862">
    <property type="entry name" value="AA_TRNA_LIGASE_II"/>
    <property type="match status" value="1"/>
</dbReference>
<accession>Q3SYZ4</accession>
<comment type="function">
    <text evidence="3">Catalyzes the specific attachment of an amino acid to its cognate tRNA in a 2 step reaction: the amino acid (AA) is first activated by ATP to form AA-AMP and then transferred to the acceptor end of the tRNA.</text>
</comment>
<comment type="catalytic activity">
    <reaction evidence="3">
        <text>tRNA(Asp) + L-aspartate + ATP = L-aspartyl-tRNA(Asp) + AMP + diphosphate</text>
        <dbReference type="Rhea" id="RHEA:19649"/>
        <dbReference type="Rhea" id="RHEA-COMP:9660"/>
        <dbReference type="Rhea" id="RHEA-COMP:9678"/>
        <dbReference type="ChEBI" id="CHEBI:29991"/>
        <dbReference type="ChEBI" id="CHEBI:30616"/>
        <dbReference type="ChEBI" id="CHEBI:33019"/>
        <dbReference type="ChEBI" id="CHEBI:78442"/>
        <dbReference type="ChEBI" id="CHEBI:78516"/>
        <dbReference type="ChEBI" id="CHEBI:456215"/>
        <dbReference type="EC" id="6.1.1.12"/>
    </reaction>
</comment>
<comment type="subunit">
    <text evidence="2">Homodimer. Part of a multisubunit complex that groups tRNA ligases for Arg (RARS1), Asp (DARS1), Gln (QARS1), Ile (IARS1), Leu (LARS1), Lys (KARS1), Met (MARS1) the bifunctional ligase for Glu and Pro (EPRS1) and the auxiliary subunits AIMP1/p43, AIMP2/p38 and EEF1E1/p18.</text>
</comment>
<comment type="subcellular location">
    <subcellularLocation>
        <location evidence="1">Cytoplasm</location>
    </subcellularLocation>
</comment>
<comment type="similarity">
    <text evidence="5">Belongs to the class-II aminoacyl-tRNA synthetase family. Type 2 subfamily.</text>
</comment>
<protein>
    <recommendedName>
        <fullName>Aspartate--tRNA ligase, cytoplasmic</fullName>
        <ecNumber evidence="3">6.1.1.12</ecNumber>
    </recommendedName>
    <alternativeName>
        <fullName>Aspartyl-tRNA synthetase</fullName>
        <shortName>AspRS</shortName>
    </alternativeName>
</protein>
<gene>
    <name type="primary">DARS1</name>
    <name type="synonym">DARS</name>
</gene>
<keyword id="KW-0007">Acetylation</keyword>
<keyword id="KW-0030">Aminoacyl-tRNA synthetase</keyword>
<keyword id="KW-0067">ATP-binding</keyword>
<keyword id="KW-0963">Cytoplasm</keyword>
<keyword id="KW-0436">Ligase</keyword>
<keyword id="KW-0547">Nucleotide-binding</keyword>
<keyword id="KW-0597">Phosphoprotein</keyword>
<keyword id="KW-0648">Protein biosynthesis</keyword>
<keyword id="KW-1185">Reference proteome</keyword>